<evidence type="ECO:0000255" key="1">
    <source>
        <dbReference type="HAMAP-Rule" id="MF_00368"/>
    </source>
</evidence>
<evidence type="ECO:0000305" key="2"/>
<protein>
    <recommendedName>
        <fullName evidence="1">Large ribosomal subunit protein bL12</fullName>
    </recommendedName>
    <alternativeName>
        <fullName evidence="2">50S ribosomal protein L7/L12</fullName>
    </alternativeName>
</protein>
<accession>A4VV10</accession>
<organism>
    <name type="scientific">Streptococcus suis (strain 05ZYH33)</name>
    <dbReference type="NCBI Taxonomy" id="391295"/>
    <lineage>
        <taxon>Bacteria</taxon>
        <taxon>Bacillati</taxon>
        <taxon>Bacillota</taxon>
        <taxon>Bacilli</taxon>
        <taxon>Lactobacillales</taxon>
        <taxon>Streptococcaceae</taxon>
        <taxon>Streptococcus</taxon>
    </lineage>
</organism>
<reference key="1">
    <citation type="journal article" date="2007" name="PLoS ONE">
        <title>A glimpse of streptococcal toxic shock syndrome from comparative genomics of S. suis 2 Chinese isolates.</title>
        <authorList>
            <person name="Chen C."/>
            <person name="Tang J."/>
            <person name="Dong W."/>
            <person name="Wang C."/>
            <person name="Feng Y."/>
            <person name="Wang J."/>
            <person name="Zheng F."/>
            <person name="Pan X."/>
            <person name="Liu D."/>
            <person name="Li M."/>
            <person name="Song Y."/>
            <person name="Zhu X."/>
            <person name="Sun H."/>
            <person name="Feng T."/>
            <person name="Guo Z."/>
            <person name="Ju A."/>
            <person name="Ge J."/>
            <person name="Dong Y."/>
            <person name="Sun W."/>
            <person name="Jiang Y."/>
            <person name="Wang J."/>
            <person name="Yan J."/>
            <person name="Yang H."/>
            <person name="Wang X."/>
            <person name="Gao G.F."/>
            <person name="Yang R."/>
            <person name="Wang J."/>
            <person name="Yu J."/>
        </authorList>
    </citation>
    <scope>NUCLEOTIDE SEQUENCE [LARGE SCALE GENOMIC DNA]</scope>
    <source>
        <strain>05ZYH33</strain>
    </source>
</reference>
<feature type="chain" id="PRO_1000007100" description="Large ribosomal subunit protein bL12">
    <location>
        <begin position="1"/>
        <end position="121"/>
    </location>
</feature>
<comment type="function">
    <text evidence="1">Forms part of the ribosomal stalk which helps the ribosome interact with GTP-bound translation factors. Is thus essential for accurate translation.</text>
</comment>
<comment type="subunit">
    <text evidence="1">Homodimer. Part of the ribosomal stalk of the 50S ribosomal subunit. Forms a multimeric L10(L12)X complex, where L10 forms an elongated spine to which 2 to 4 L12 dimers bind in a sequential fashion. Binds GTP-bound translation factors.</text>
</comment>
<comment type="similarity">
    <text evidence="1">Belongs to the bacterial ribosomal protein bL12 family.</text>
</comment>
<dbReference type="EMBL" id="CP000407">
    <property type="protein sequence ID" value="ABP89949.1"/>
    <property type="molecule type" value="Genomic_DNA"/>
</dbReference>
<dbReference type="SMR" id="A4VV10"/>
<dbReference type="STRING" id="391295.SSU05_0983"/>
<dbReference type="KEGG" id="ssu:SSU05_0983"/>
<dbReference type="eggNOG" id="COG0222">
    <property type="taxonomic scope" value="Bacteria"/>
</dbReference>
<dbReference type="HOGENOM" id="CLU_086499_3_2_9"/>
<dbReference type="GO" id="GO:0022625">
    <property type="term" value="C:cytosolic large ribosomal subunit"/>
    <property type="evidence" value="ECO:0007669"/>
    <property type="project" value="TreeGrafter"/>
</dbReference>
<dbReference type="GO" id="GO:0003729">
    <property type="term" value="F:mRNA binding"/>
    <property type="evidence" value="ECO:0007669"/>
    <property type="project" value="TreeGrafter"/>
</dbReference>
<dbReference type="GO" id="GO:0003735">
    <property type="term" value="F:structural constituent of ribosome"/>
    <property type="evidence" value="ECO:0007669"/>
    <property type="project" value="InterPro"/>
</dbReference>
<dbReference type="GO" id="GO:0006412">
    <property type="term" value="P:translation"/>
    <property type="evidence" value="ECO:0007669"/>
    <property type="project" value="UniProtKB-UniRule"/>
</dbReference>
<dbReference type="CDD" id="cd00387">
    <property type="entry name" value="Ribosomal_L7_L12"/>
    <property type="match status" value="1"/>
</dbReference>
<dbReference type="FunFam" id="1.20.5.710:FF:000002">
    <property type="entry name" value="50S ribosomal protein L7/L12"/>
    <property type="match status" value="1"/>
</dbReference>
<dbReference type="FunFam" id="3.30.1390.10:FF:000001">
    <property type="entry name" value="50S ribosomal protein L7/L12"/>
    <property type="match status" value="1"/>
</dbReference>
<dbReference type="Gene3D" id="3.30.1390.10">
    <property type="match status" value="1"/>
</dbReference>
<dbReference type="Gene3D" id="1.20.5.710">
    <property type="entry name" value="Single helix bin"/>
    <property type="match status" value="1"/>
</dbReference>
<dbReference type="HAMAP" id="MF_00368">
    <property type="entry name" value="Ribosomal_bL12"/>
    <property type="match status" value="1"/>
</dbReference>
<dbReference type="InterPro" id="IPR000206">
    <property type="entry name" value="Ribosomal_bL12"/>
</dbReference>
<dbReference type="InterPro" id="IPR013823">
    <property type="entry name" value="Ribosomal_bL12_C"/>
</dbReference>
<dbReference type="InterPro" id="IPR014719">
    <property type="entry name" value="Ribosomal_bL12_C/ClpS-like"/>
</dbReference>
<dbReference type="InterPro" id="IPR008932">
    <property type="entry name" value="Ribosomal_bL12_oligo"/>
</dbReference>
<dbReference type="InterPro" id="IPR036235">
    <property type="entry name" value="Ribosomal_bL12_oligo_N_sf"/>
</dbReference>
<dbReference type="NCBIfam" id="TIGR00855">
    <property type="entry name" value="L12"/>
    <property type="match status" value="1"/>
</dbReference>
<dbReference type="PANTHER" id="PTHR45987">
    <property type="entry name" value="39S RIBOSOMAL PROTEIN L12"/>
    <property type="match status" value="1"/>
</dbReference>
<dbReference type="PANTHER" id="PTHR45987:SF4">
    <property type="entry name" value="LARGE RIBOSOMAL SUBUNIT PROTEIN BL12M"/>
    <property type="match status" value="1"/>
</dbReference>
<dbReference type="Pfam" id="PF00542">
    <property type="entry name" value="Ribosomal_L12"/>
    <property type="match status" value="1"/>
</dbReference>
<dbReference type="Pfam" id="PF16320">
    <property type="entry name" value="Ribosomal_L12_N"/>
    <property type="match status" value="1"/>
</dbReference>
<dbReference type="SUPFAM" id="SSF54736">
    <property type="entry name" value="ClpS-like"/>
    <property type="match status" value="1"/>
</dbReference>
<dbReference type="SUPFAM" id="SSF48300">
    <property type="entry name" value="Ribosomal protein L7/12, oligomerisation (N-terminal) domain"/>
    <property type="match status" value="1"/>
</dbReference>
<gene>
    <name evidence="1" type="primary">rplL</name>
    <name type="ordered locus">SSU05_0983</name>
</gene>
<sequence>MALNIENIIAEIKEATILELNDLVKAIEEEFGVTAAAPVAVAAAGGAAEEAKDSFDVELTSAGDKKVGVIKVVREITGLGLKEAKELVDGAPAMVKEGVATAEAEEIKAKLEEAGASVTLK</sequence>
<proteinExistence type="inferred from homology"/>
<keyword id="KW-0687">Ribonucleoprotein</keyword>
<keyword id="KW-0689">Ribosomal protein</keyword>
<name>RL7_STRSY</name>